<keyword id="KW-0131">Cell cycle</keyword>
<keyword id="KW-0132">Cell division</keyword>
<keyword id="KW-0717">Septation</keyword>
<accession>B6EIV8</accession>
<protein>
    <recommendedName>
        <fullName evidence="1">Probable septum site-determining protein MinC</fullName>
    </recommendedName>
</protein>
<comment type="function">
    <text evidence="1">Cell division inhibitor that blocks the formation of polar Z ring septums. Rapidly oscillates between the poles of the cell to destabilize FtsZ filaments that have formed before they mature into polar Z rings. Prevents FtsZ polymerization.</text>
</comment>
<comment type="subunit">
    <text evidence="1">Interacts with MinD and FtsZ.</text>
</comment>
<comment type="similarity">
    <text evidence="1">Belongs to the MinC family.</text>
</comment>
<reference key="1">
    <citation type="journal article" date="2008" name="BMC Genomics">
        <title>The genome sequence of the fish pathogen Aliivibrio salmonicida strain LFI1238 shows extensive evidence of gene decay.</title>
        <authorList>
            <person name="Hjerde E."/>
            <person name="Lorentzen M.S."/>
            <person name="Holden M.T."/>
            <person name="Seeger K."/>
            <person name="Paulsen S."/>
            <person name="Bason N."/>
            <person name="Churcher C."/>
            <person name="Harris D."/>
            <person name="Norbertczak H."/>
            <person name="Quail M.A."/>
            <person name="Sanders S."/>
            <person name="Thurston S."/>
            <person name="Parkhill J."/>
            <person name="Willassen N.P."/>
            <person name="Thomson N.R."/>
        </authorList>
    </citation>
    <scope>NUCLEOTIDE SEQUENCE [LARGE SCALE GENOMIC DNA]</scope>
    <source>
        <strain>LFI1238</strain>
    </source>
</reference>
<sequence length="221" mass="24046">MTKTADLKGSNFTLSVLHLPNDDITQALSMLEQKVAQAPSFFASAPVVINIENVSNEINFVDLKLGVERTGMIPVGITGCKDKEKQAQATSAGFAVMTSFTPQQVTQKANMQPTKVVRTPIRSGQQVYAKDADLVILNHVSPGAEVIADGSIHIHGTLRGRAIAGASGQKEAKIFCKNLQAELISIAGNYWLSDQINKEYWHQNVMVTMVEDHIKIDTLTL</sequence>
<name>MINC_ALISL</name>
<gene>
    <name evidence="1" type="primary">minC</name>
    <name type="ordered locus">VSAL_I1067</name>
</gene>
<feature type="chain" id="PRO_1000114265" description="Probable septum site-determining protein MinC">
    <location>
        <begin position="1"/>
        <end position="221"/>
    </location>
</feature>
<dbReference type="EMBL" id="FM178379">
    <property type="protein sequence ID" value="CAQ78752.1"/>
    <property type="molecule type" value="Genomic_DNA"/>
</dbReference>
<dbReference type="RefSeq" id="WP_012549822.1">
    <property type="nucleotide sequence ID" value="NC_011312.1"/>
</dbReference>
<dbReference type="SMR" id="B6EIV8"/>
<dbReference type="KEGG" id="vsa:VSAL_I1067"/>
<dbReference type="eggNOG" id="COG0850">
    <property type="taxonomic scope" value="Bacteria"/>
</dbReference>
<dbReference type="HOGENOM" id="CLU_067812_0_1_6"/>
<dbReference type="Proteomes" id="UP000001730">
    <property type="component" value="Chromosome 1"/>
</dbReference>
<dbReference type="GO" id="GO:0000902">
    <property type="term" value="P:cell morphogenesis"/>
    <property type="evidence" value="ECO:0007669"/>
    <property type="project" value="InterPro"/>
</dbReference>
<dbReference type="GO" id="GO:0000917">
    <property type="term" value="P:division septum assembly"/>
    <property type="evidence" value="ECO:0007669"/>
    <property type="project" value="UniProtKB-KW"/>
</dbReference>
<dbReference type="GO" id="GO:0051302">
    <property type="term" value="P:regulation of cell division"/>
    <property type="evidence" value="ECO:0007669"/>
    <property type="project" value="InterPro"/>
</dbReference>
<dbReference type="GO" id="GO:1901891">
    <property type="term" value="P:regulation of cell septum assembly"/>
    <property type="evidence" value="ECO:0007669"/>
    <property type="project" value="InterPro"/>
</dbReference>
<dbReference type="Gene3D" id="2.160.20.70">
    <property type="match status" value="1"/>
</dbReference>
<dbReference type="Gene3D" id="3.30.70.260">
    <property type="match status" value="1"/>
</dbReference>
<dbReference type="HAMAP" id="MF_00267">
    <property type="entry name" value="MinC"/>
    <property type="match status" value="1"/>
</dbReference>
<dbReference type="InterPro" id="IPR016098">
    <property type="entry name" value="CAP/MinC_C"/>
</dbReference>
<dbReference type="InterPro" id="IPR013033">
    <property type="entry name" value="MinC"/>
</dbReference>
<dbReference type="InterPro" id="IPR036145">
    <property type="entry name" value="MinC_C_sf"/>
</dbReference>
<dbReference type="InterPro" id="IPR007874">
    <property type="entry name" value="MinC_N"/>
</dbReference>
<dbReference type="InterPro" id="IPR005526">
    <property type="entry name" value="Septum_form_inhib_MinC_C"/>
</dbReference>
<dbReference type="NCBIfam" id="TIGR01222">
    <property type="entry name" value="minC"/>
    <property type="match status" value="1"/>
</dbReference>
<dbReference type="PANTHER" id="PTHR34108">
    <property type="entry name" value="SEPTUM SITE-DETERMINING PROTEIN MINC"/>
    <property type="match status" value="1"/>
</dbReference>
<dbReference type="PANTHER" id="PTHR34108:SF1">
    <property type="entry name" value="SEPTUM SITE-DETERMINING PROTEIN MINC"/>
    <property type="match status" value="1"/>
</dbReference>
<dbReference type="Pfam" id="PF03775">
    <property type="entry name" value="MinC_C"/>
    <property type="match status" value="1"/>
</dbReference>
<dbReference type="Pfam" id="PF05209">
    <property type="entry name" value="MinC_N"/>
    <property type="match status" value="1"/>
</dbReference>
<dbReference type="SUPFAM" id="SSF63848">
    <property type="entry name" value="Cell-division inhibitor MinC, C-terminal domain"/>
    <property type="match status" value="1"/>
</dbReference>
<evidence type="ECO:0000255" key="1">
    <source>
        <dbReference type="HAMAP-Rule" id="MF_00267"/>
    </source>
</evidence>
<organism>
    <name type="scientific">Aliivibrio salmonicida (strain LFI1238)</name>
    <name type="common">Vibrio salmonicida (strain LFI1238)</name>
    <dbReference type="NCBI Taxonomy" id="316275"/>
    <lineage>
        <taxon>Bacteria</taxon>
        <taxon>Pseudomonadati</taxon>
        <taxon>Pseudomonadota</taxon>
        <taxon>Gammaproteobacteria</taxon>
        <taxon>Vibrionales</taxon>
        <taxon>Vibrionaceae</taxon>
        <taxon>Aliivibrio</taxon>
    </lineage>
</organism>
<proteinExistence type="inferred from homology"/>